<comment type="function">
    <text evidence="1">Trims short 3' overhangs of a variety of RNA species, leaving a one or two nucleotide 3' overhang. Responsible for the end-turnover of tRNA: specifically removes the terminal AMP residue from uncharged tRNA (tRNA-C-C-A). Also appears to be involved in tRNA biosynthesis.</text>
</comment>
<comment type="cofactor">
    <cofactor evidence="1">
        <name>Mg(2+)</name>
        <dbReference type="ChEBI" id="CHEBI:18420"/>
    </cofactor>
    <text evidence="1">Binds two Mg(2+) per subunit. The active form of the enzyme binds two Mg(2+) ions in its active site. The first Mg(2+) forms only one salt bridge with the protein.</text>
</comment>
<comment type="subunit">
    <text evidence="1">Homodimer.</text>
</comment>
<comment type="similarity">
    <text evidence="1">Belongs to the RNase T family.</text>
</comment>
<sequence length="221" mass="24970">MFIYKDINYAINNRFRGFYPVVIDIESAGFQADTDALLEIAIVTLKMNKSGWLKIDDRLHFHIIPFKGSIIKAESVAFNKIDPFNPLRGAVSEKNALKNIFKLVRKKININKCRKGILVAHNANFDHNFLMAASKRVGNLNNPFHPFTTFDTAALSGLIFGQTVLAKACKLAGIPFDTNQAHSALYDTIQTAYLFCELVNRWKRLGGWPPNSSHRKKTDEI</sequence>
<evidence type="ECO:0000255" key="1">
    <source>
        <dbReference type="HAMAP-Rule" id="MF_00157"/>
    </source>
</evidence>
<feature type="chain" id="PRO_1000011387" description="Ribonuclease T">
    <location>
        <begin position="1"/>
        <end position="221"/>
    </location>
</feature>
<feature type="domain" description="Exonuclease" evidence="1">
    <location>
        <begin position="21"/>
        <end position="195"/>
    </location>
</feature>
<feature type="active site" description="Proton donor/acceptor" evidence="1">
    <location>
        <position position="182"/>
    </location>
</feature>
<feature type="binding site" evidence="1">
    <location>
        <position position="24"/>
    </location>
    <ligand>
        <name>Mg(2+)</name>
        <dbReference type="ChEBI" id="CHEBI:18420"/>
        <label>1</label>
        <note>catalytic</note>
    </ligand>
</feature>
<feature type="binding site" evidence="1">
    <location>
        <position position="24"/>
    </location>
    <ligand>
        <name>Mg(2+)</name>
        <dbReference type="ChEBI" id="CHEBI:18420"/>
        <label>2</label>
        <note>catalytic</note>
    </ligand>
</feature>
<feature type="binding site" evidence="1">
    <location>
        <position position="26"/>
    </location>
    <ligand>
        <name>Mg(2+)</name>
        <dbReference type="ChEBI" id="CHEBI:18420"/>
        <label>2</label>
        <note>catalytic</note>
    </ligand>
</feature>
<feature type="binding site" evidence="1">
    <location>
        <position position="182"/>
    </location>
    <ligand>
        <name>Mg(2+)</name>
        <dbReference type="ChEBI" id="CHEBI:18420"/>
        <label>2</label>
        <note>catalytic</note>
    </ligand>
</feature>
<feature type="binding site" evidence="1">
    <location>
        <position position="187"/>
    </location>
    <ligand>
        <name>Mg(2+)</name>
        <dbReference type="ChEBI" id="CHEBI:18420"/>
        <label>2</label>
        <note>catalytic</note>
    </ligand>
</feature>
<feature type="site" description="Important for substrate binding and specificity" evidence="1">
    <location>
        <position position="30"/>
    </location>
</feature>
<feature type="site" description="Important for substrate binding and specificity" evidence="1">
    <location>
        <position position="78"/>
    </location>
</feature>
<feature type="site" description="Important for substrate binding and specificity" evidence="1">
    <location>
        <position position="125"/>
    </location>
</feature>
<feature type="site" description="Important for substrate binding and specificity" evidence="1">
    <location>
        <position position="147"/>
    </location>
</feature>
<protein>
    <recommendedName>
        <fullName evidence="1">Ribonuclease T</fullName>
        <ecNumber evidence="1">3.1.13.-</ecNumber>
    </recommendedName>
    <alternativeName>
        <fullName evidence="1">Exoribonuclease T</fullName>
        <shortName evidence="1">RNase T</shortName>
    </alternativeName>
</protein>
<keyword id="KW-0269">Exonuclease</keyword>
<keyword id="KW-0378">Hydrolase</keyword>
<keyword id="KW-0460">Magnesium</keyword>
<keyword id="KW-0479">Metal-binding</keyword>
<keyword id="KW-0540">Nuclease</keyword>
<keyword id="KW-1185">Reference proteome</keyword>
<keyword id="KW-0819">tRNA processing</keyword>
<organism>
    <name type="scientific">Buchnera aphidicola subsp. Cinara cedri (strain Cc)</name>
    <dbReference type="NCBI Taxonomy" id="372461"/>
    <lineage>
        <taxon>Bacteria</taxon>
        <taxon>Pseudomonadati</taxon>
        <taxon>Pseudomonadota</taxon>
        <taxon>Gammaproteobacteria</taxon>
        <taxon>Enterobacterales</taxon>
        <taxon>Erwiniaceae</taxon>
        <taxon>Buchnera</taxon>
    </lineage>
</organism>
<accession>Q057V1</accession>
<gene>
    <name evidence="1" type="primary">rnt</name>
    <name type="ordered locus">BCc_122</name>
</gene>
<dbReference type="EC" id="3.1.13.-" evidence="1"/>
<dbReference type="EMBL" id="CP000263">
    <property type="protein sequence ID" value="ABJ90598.1"/>
    <property type="molecule type" value="Genomic_DNA"/>
</dbReference>
<dbReference type="RefSeq" id="WP_011672517.1">
    <property type="nucleotide sequence ID" value="NC_008513.1"/>
</dbReference>
<dbReference type="SMR" id="Q057V1"/>
<dbReference type="STRING" id="372461.BCc_122"/>
<dbReference type="KEGG" id="bcc:BCc_122"/>
<dbReference type="eggNOG" id="COG0847">
    <property type="taxonomic scope" value="Bacteria"/>
</dbReference>
<dbReference type="HOGENOM" id="CLU_082724_0_0_6"/>
<dbReference type="OrthoDB" id="9778264at2"/>
<dbReference type="Proteomes" id="UP000000669">
    <property type="component" value="Chromosome"/>
</dbReference>
<dbReference type="GO" id="GO:0005829">
    <property type="term" value="C:cytosol"/>
    <property type="evidence" value="ECO:0007669"/>
    <property type="project" value="TreeGrafter"/>
</dbReference>
<dbReference type="GO" id="GO:0008408">
    <property type="term" value="F:3'-5' exonuclease activity"/>
    <property type="evidence" value="ECO:0007669"/>
    <property type="project" value="TreeGrafter"/>
</dbReference>
<dbReference type="GO" id="GO:0000287">
    <property type="term" value="F:magnesium ion binding"/>
    <property type="evidence" value="ECO:0007669"/>
    <property type="project" value="UniProtKB-UniRule"/>
</dbReference>
<dbReference type="GO" id="GO:0003676">
    <property type="term" value="F:nucleic acid binding"/>
    <property type="evidence" value="ECO:0007669"/>
    <property type="project" value="InterPro"/>
</dbReference>
<dbReference type="GO" id="GO:0016896">
    <property type="term" value="F:RNA exonuclease activity, producing 5'-phosphomonoesters"/>
    <property type="evidence" value="ECO:0007669"/>
    <property type="project" value="UniProtKB-UniRule"/>
</dbReference>
<dbReference type="GO" id="GO:0045004">
    <property type="term" value="P:DNA replication proofreading"/>
    <property type="evidence" value="ECO:0007669"/>
    <property type="project" value="TreeGrafter"/>
</dbReference>
<dbReference type="GO" id="GO:0008033">
    <property type="term" value="P:tRNA processing"/>
    <property type="evidence" value="ECO:0007669"/>
    <property type="project" value="UniProtKB-KW"/>
</dbReference>
<dbReference type="FunFam" id="3.30.420.10:FF:000009">
    <property type="entry name" value="Ribonuclease T"/>
    <property type="match status" value="1"/>
</dbReference>
<dbReference type="Gene3D" id="3.30.420.10">
    <property type="entry name" value="Ribonuclease H-like superfamily/Ribonuclease H"/>
    <property type="match status" value="1"/>
</dbReference>
<dbReference type="HAMAP" id="MF_00157">
    <property type="entry name" value="RNase_T"/>
    <property type="match status" value="1"/>
</dbReference>
<dbReference type="InterPro" id="IPR013520">
    <property type="entry name" value="Exonuclease_RNaseT/DNA_pol3"/>
</dbReference>
<dbReference type="InterPro" id="IPR005987">
    <property type="entry name" value="RNase_T"/>
</dbReference>
<dbReference type="InterPro" id="IPR012337">
    <property type="entry name" value="RNaseH-like_sf"/>
</dbReference>
<dbReference type="InterPro" id="IPR036397">
    <property type="entry name" value="RNaseH_sf"/>
</dbReference>
<dbReference type="NCBIfam" id="TIGR01298">
    <property type="entry name" value="RNaseT"/>
    <property type="match status" value="1"/>
</dbReference>
<dbReference type="PANTHER" id="PTHR30231">
    <property type="entry name" value="DNA POLYMERASE III SUBUNIT EPSILON"/>
    <property type="match status" value="1"/>
</dbReference>
<dbReference type="PANTHER" id="PTHR30231:SF2">
    <property type="entry name" value="RIBONUCLEASE T"/>
    <property type="match status" value="1"/>
</dbReference>
<dbReference type="Pfam" id="PF00929">
    <property type="entry name" value="RNase_T"/>
    <property type="match status" value="1"/>
</dbReference>
<dbReference type="SMART" id="SM00479">
    <property type="entry name" value="EXOIII"/>
    <property type="match status" value="1"/>
</dbReference>
<dbReference type="SUPFAM" id="SSF53098">
    <property type="entry name" value="Ribonuclease H-like"/>
    <property type="match status" value="1"/>
</dbReference>
<reference key="1">
    <citation type="journal article" date="2006" name="Science">
        <title>A small microbial genome: the end of a long symbiotic relationship?</title>
        <authorList>
            <person name="Perez-Brocal V."/>
            <person name="Gil R."/>
            <person name="Ramos S."/>
            <person name="Lamelas A."/>
            <person name="Postigo M."/>
            <person name="Michelena J.M."/>
            <person name="Silva F.J."/>
            <person name="Moya A."/>
            <person name="Latorre A."/>
        </authorList>
    </citation>
    <scope>NUCLEOTIDE SEQUENCE [LARGE SCALE GENOMIC DNA]</scope>
    <source>
        <strain>Cc</strain>
    </source>
</reference>
<name>RNT_BUCCC</name>
<proteinExistence type="inferred from homology"/>